<reference key="1">
    <citation type="journal article" date="2006" name="Nat. Biotechnol.">
        <title>Genome sequence of the ubiquitous hydrocarbon-degrading marine bacterium Alcanivorax borkumensis.</title>
        <authorList>
            <person name="Schneiker S."/>
            <person name="Martins dos Santos V.A.P."/>
            <person name="Bartels D."/>
            <person name="Bekel T."/>
            <person name="Brecht M."/>
            <person name="Buhrmester J."/>
            <person name="Chernikova T.N."/>
            <person name="Denaro R."/>
            <person name="Ferrer M."/>
            <person name="Gertler C."/>
            <person name="Goesmann A."/>
            <person name="Golyshina O.V."/>
            <person name="Kaminski F."/>
            <person name="Khachane A.N."/>
            <person name="Lang S."/>
            <person name="Linke B."/>
            <person name="McHardy A.C."/>
            <person name="Meyer F."/>
            <person name="Nechitaylo T."/>
            <person name="Puehler A."/>
            <person name="Regenhardt D."/>
            <person name="Rupp O."/>
            <person name="Sabirova J.S."/>
            <person name="Selbitschka W."/>
            <person name="Yakimov M.M."/>
            <person name="Timmis K.N."/>
            <person name="Vorhoelter F.-J."/>
            <person name="Weidner S."/>
            <person name="Kaiser O."/>
            <person name="Golyshin P.N."/>
        </authorList>
    </citation>
    <scope>NUCLEOTIDE SEQUENCE [LARGE SCALE GENOMIC DNA]</scope>
    <source>
        <strain>ATCC 700651 / DSM 11573 / NCIMB 13689 / SK2</strain>
    </source>
</reference>
<name>YIDD_ALCBS</name>
<protein>
    <recommendedName>
        <fullName evidence="1">Putative membrane protein insertion efficiency factor</fullName>
    </recommendedName>
</protein>
<proteinExistence type="inferred from homology"/>
<evidence type="ECO:0000255" key="1">
    <source>
        <dbReference type="HAMAP-Rule" id="MF_00386"/>
    </source>
</evidence>
<evidence type="ECO:0000256" key="2">
    <source>
        <dbReference type="SAM" id="MobiDB-lite"/>
    </source>
</evidence>
<evidence type="ECO:0000305" key="3"/>
<feature type="chain" id="PRO_0000253069" description="Putative membrane protein insertion efficiency factor">
    <location>
        <begin position="1"/>
        <end position="97"/>
    </location>
</feature>
<feature type="region of interest" description="Disordered" evidence="2">
    <location>
        <begin position="72"/>
        <end position="97"/>
    </location>
</feature>
<organism>
    <name type="scientific">Alcanivorax borkumensis (strain ATCC 700651 / DSM 11573 / NCIMB 13689 / SK2)</name>
    <dbReference type="NCBI Taxonomy" id="393595"/>
    <lineage>
        <taxon>Bacteria</taxon>
        <taxon>Pseudomonadati</taxon>
        <taxon>Pseudomonadota</taxon>
        <taxon>Gammaproteobacteria</taxon>
        <taxon>Oceanospirillales</taxon>
        <taxon>Alcanivoracaceae</taxon>
        <taxon>Alcanivorax</taxon>
    </lineage>
</organism>
<keyword id="KW-0997">Cell inner membrane</keyword>
<keyword id="KW-1003">Cell membrane</keyword>
<keyword id="KW-0472">Membrane</keyword>
<keyword id="KW-1185">Reference proteome</keyword>
<gene>
    <name type="ordered locus">ABO_2137</name>
</gene>
<comment type="function">
    <text evidence="1">Could be involved in insertion of integral membrane proteins into the membrane.</text>
</comment>
<comment type="subcellular location">
    <subcellularLocation>
        <location evidence="1">Cell inner membrane</location>
        <topology evidence="1">Peripheral membrane protein</topology>
        <orientation evidence="1">Cytoplasmic side</orientation>
    </subcellularLocation>
</comment>
<comment type="similarity">
    <text evidence="1">Belongs to the UPF0161 family.</text>
</comment>
<comment type="sequence caution" evidence="3">
    <conflict type="erroneous initiation">
        <sequence resource="EMBL-CDS" id="CAL17585"/>
    </conflict>
</comment>
<sequence length="97" mass="10843">MKSLLLGAIWLYQKVLSPWIGNQCRFYPTCSEYARQAVETHGSLRGSALAAKRLCKCHPWHPGGFDYVPGAVPGAEPDQEQHQCTPLCNHHSEDHSQ</sequence>
<dbReference type="EMBL" id="AM286690">
    <property type="protein sequence ID" value="CAL17585.1"/>
    <property type="status" value="ALT_INIT"/>
    <property type="molecule type" value="Genomic_DNA"/>
</dbReference>
<dbReference type="STRING" id="393595.ABO_2137"/>
<dbReference type="KEGG" id="abo:ABO_2137"/>
<dbReference type="eggNOG" id="COG0759">
    <property type="taxonomic scope" value="Bacteria"/>
</dbReference>
<dbReference type="HOGENOM" id="CLU_1465298_0_0_6"/>
<dbReference type="Proteomes" id="UP000008871">
    <property type="component" value="Chromosome"/>
</dbReference>
<dbReference type="GO" id="GO:0005886">
    <property type="term" value="C:plasma membrane"/>
    <property type="evidence" value="ECO:0007669"/>
    <property type="project" value="UniProtKB-SubCell"/>
</dbReference>
<dbReference type="HAMAP" id="MF_00386">
    <property type="entry name" value="UPF0161_YidD"/>
    <property type="match status" value="1"/>
</dbReference>
<dbReference type="InterPro" id="IPR002696">
    <property type="entry name" value="Membr_insert_effic_factor_YidD"/>
</dbReference>
<dbReference type="NCBIfam" id="TIGR00278">
    <property type="entry name" value="membrane protein insertion efficiency factor YidD"/>
    <property type="match status" value="1"/>
</dbReference>
<dbReference type="PANTHER" id="PTHR33383">
    <property type="entry name" value="MEMBRANE PROTEIN INSERTION EFFICIENCY FACTOR-RELATED"/>
    <property type="match status" value="1"/>
</dbReference>
<dbReference type="PANTHER" id="PTHR33383:SF1">
    <property type="entry name" value="MEMBRANE PROTEIN INSERTION EFFICIENCY FACTOR-RELATED"/>
    <property type="match status" value="1"/>
</dbReference>
<dbReference type="Pfam" id="PF01809">
    <property type="entry name" value="YidD"/>
    <property type="match status" value="1"/>
</dbReference>
<dbReference type="SMART" id="SM01234">
    <property type="entry name" value="Haemolytic"/>
    <property type="match status" value="1"/>
</dbReference>
<accession>Q0VML3</accession>